<comment type="function">
    <text evidence="1">Pyrophosphatase that catalyzes the hydrolysis of nucleoside triphosphates to their monophosphate derivatives, with a high preference for the non-canonical purine nucleotides XTP (xanthosine triphosphate), dITP (deoxyinosine triphosphate) and ITP. Seems to function as a house-cleaning enzyme that removes non-canonical purine nucleotides from the nucleotide pool, thus preventing their incorporation into DNA/RNA and avoiding chromosomal lesions.</text>
</comment>
<comment type="catalytic activity">
    <reaction evidence="1">
        <text>XTP + H2O = XMP + diphosphate + H(+)</text>
        <dbReference type="Rhea" id="RHEA:28610"/>
        <dbReference type="ChEBI" id="CHEBI:15377"/>
        <dbReference type="ChEBI" id="CHEBI:15378"/>
        <dbReference type="ChEBI" id="CHEBI:33019"/>
        <dbReference type="ChEBI" id="CHEBI:57464"/>
        <dbReference type="ChEBI" id="CHEBI:61314"/>
        <dbReference type="EC" id="3.6.1.66"/>
    </reaction>
</comment>
<comment type="catalytic activity">
    <reaction evidence="1">
        <text>dITP + H2O = dIMP + diphosphate + H(+)</text>
        <dbReference type="Rhea" id="RHEA:28342"/>
        <dbReference type="ChEBI" id="CHEBI:15377"/>
        <dbReference type="ChEBI" id="CHEBI:15378"/>
        <dbReference type="ChEBI" id="CHEBI:33019"/>
        <dbReference type="ChEBI" id="CHEBI:61194"/>
        <dbReference type="ChEBI" id="CHEBI:61382"/>
        <dbReference type="EC" id="3.6.1.66"/>
    </reaction>
</comment>
<comment type="catalytic activity">
    <reaction evidence="1">
        <text>ITP + H2O = IMP + diphosphate + H(+)</text>
        <dbReference type="Rhea" id="RHEA:29399"/>
        <dbReference type="ChEBI" id="CHEBI:15377"/>
        <dbReference type="ChEBI" id="CHEBI:15378"/>
        <dbReference type="ChEBI" id="CHEBI:33019"/>
        <dbReference type="ChEBI" id="CHEBI:58053"/>
        <dbReference type="ChEBI" id="CHEBI:61402"/>
        <dbReference type="EC" id="3.6.1.66"/>
    </reaction>
</comment>
<comment type="cofactor">
    <cofactor evidence="1">
        <name>Mg(2+)</name>
        <dbReference type="ChEBI" id="CHEBI:18420"/>
    </cofactor>
    <text evidence="1">Binds 1 Mg(2+) ion per subunit.</text>
</comment>
<comment type="subunit">
    <text evidence="1">Homodimer.</text>
</comment>
<comment type="similarity">
    <text evidence="1">Belongs to the HAM1 NTPase family.</text>
</comment>
<proteinExistence type="inferred from homology"/>
<organism>
    <name type="scientific">Shouchella clausii (strain KSM-K16)</name>
    <name type="common">Alkalihalobacillus clausii</name>
    <dbReference type="NCBI Taxonomy" id="66692"/>
    <lineage>
        <taxon>Bacteria</taxon>
        <taxon>Bacillati</taxon>
        <taxon>Bacillota</taxon>
        <taxon>Bacilli</taxon>
        <taxon>Bacillales</taxon>
        <taxon>Bacillaceae</taxon>
        <taxon>Shouchella</taxon>
    </lineage>
</organism>
<accession>Q5WEM4</accession>
<dbReference type="EC" id="3.6.1.66" evidence="1"/>
<dbReference type="EMBL" id="AP006627">
    <property type="protein sequence ID" value="BAD65186.1"/>
    <property type="molecule type" value="Genomic_DNA"/>
</dbReference>
<dbReference type="RefSeq" id="WP_011247494.1">
    <property type="nucleotide sequence ID" value="NC_006582.1"/>
</dbReference>
<dbReference type="SMR" id="Q5WEM4"/>
<dbReference type="STRING" id="66692.ABC2651"/>
<dbReference type="KEGG" id="bcl:ABC2651"/>
<dbReference type="eggNOG" id="COG0127">
    <property type="taxonomic scope" value="Bacteria"/>
</dbReference>
<dbReference type="HOGENOM" id="CLU_082080_0_2_9"/>
<dbReference type="OrthoDB" id="9807456at2"/>
<dbReference type="Proteomes" id="UP000001168">
    <property type="component" value="Chromosome"/>
</dbReference>
<dbReference type="GO" id="GO:0005829">
    <property type="term" value="C:cytosol"/>
    <property type="evidence" value="ECO:0007669"/>
    <property type="project" value="TreeGrafter"/>
</dbReference>
<dbReference type="GO" id="GO:0035870">
    <property type="term" value="F:dITP diphosphatase activity"/>
    <property type="evidence" value="ECO:0007669"/>
    <property type="project" value="RHEA"/>
</dbReference>
<dbReference type="GO" id="GO:0036220">
    <property type="term" value="F:ITP diphosphatase activity"/>
    <property type="evidence" value="ECO:0007669"/>
    <property type="project" value="UniProtKB-EC"/>
</dbReference>
<dbReference type="GO" id="GO:0046872">
    <property type="term" value="F:metal ion binding"/>
    <property type="evidence" value="ECO:0007669"/>
    <property type="project" value="UniProtKB-KW"/>
</dbReference>
<dbReference type="GO" id="GO:0000166">
    <property type="term" value="F:nucleotide binding"/>
    <property type="evidence" value="ECO:0007669"/>
    <property type="project" value="UniProtKB-KW"/>
</dbReference>
<dbReference type="GO" id="GO:0017111">
    <property type="term" value="F:ribonucleoside triphosphate phosphatase activity"/>
    <property type="evidence" value="ECO:0007669"/>
    <property type="project" value="InterPro"/>
</dbReference>
<dbReference type="GO" id="GO:0036222">
    <property type="term" value="F:XTP diphosphatase activity"/>
    <property type="evidence" value="ECO:0007669"/>
    <property type="project" value="RHEA"/>
</dbReference>
<dbReference type="GO" id="GO:0009117">
    <property type="term" value="P:nucleotide metabolic process"/>
    <property type="evidence" value="ECO:0007669"/>
    <property type="project" value="UniProtKB-KW"/>
</dbReference>
<dbReference type="GO" id="GO:0009146">
    <property type="term" value="P:purine nucleoside triphosphate catabolic process"/>
    <property type="evidence" value="ECO:0007669"/>
    <property type="project" value="UniProtKB-UniRule"/>
</dbReference>
<dbReference type="CDD" id="cd00515">
    <property type="entry name" value="HAM1"/>
    <property type="match status" value="1"/>
</dbReference>
<dbReference type="FunFam" id="3.90.950.10:FF:000001">
    <property type="entry name" value="dITP/XTP pyrophosphatase"/>
    <property type="match status" value="1"/>
</dbReference>
<dbReference type="Gene3D" id="3.90.950.10">
    <property type="match status" value="1"/>
</dbReference>
<dbReference type="HAMAP" id="MF_01405">
    <property type="entry name" value="Non_canon_purine_NTPase"/>
    <property type="match status" value="1"/>
</dbReference>
<dbReference type="InterPro" id="IPR020922">
    <property type="entry name" value="dITP/XTP_pyrophosphatase"/>
</dbReference>
<dbReference type="InterPro" id="IPR029001">
    <property type="entry name" value="ITPase-like_fam"/>
</dbReference>
<dbReference type="InterPro" id="IPR002637">
    <property type="entry name" value="RdgB/HAM1"/>
</dbReference>
<dbReference type="NCBIfam" id="NF011397">
    <property type="entry name" value="PRK14822.1"/>
    <property type="match status" value="1"/>
</dbReference>
<dbReference type="NCBIfam" id="TIGR00042">
    <property type="entry name" value="RdgB/HAM1 family non-canonical purine NTP pyrophosphatase"/>
    <property type="match status" value="1"/>
</dbReference>
<dbReference type="PANTHER" id="PTHR11067:SF9">
    <property type="entry name" value="INOSINE TRIPHOSPHATE PYROPHOSPHATASE"/>
    <property type="match status" value="1"/>
</dbReference>
<dbReference type="PANTHER" id="PTHR11067">
    <property type="entry name" value="INOSINE TRIPHOSPHATE PYROPHOSPHATASE/HAM1 PROTEIN"/>
    <property type="match status" value="1"/>
</dbReference>
<dbReference type="Pfam" id="PF01725">
    <property type="entry name" value="Ham1p_like"/>
    <property type="match status" value="1"/>
</dbReference>
<dbReference type="SUPFAM" id="SSF52972">
    <property type="entry name" value="ITPase-like"/>
    <property type="match status" value="1"/>
</dbReference>
<name>IXTPA_SHOC1</name>
<sequence length="198" mass="21585">MNELVVATKNKGKLADFQTLFTDRYIVKSLYDYPEVPEIIEDGDTFHENAAKKAETLAAYLQKLVIADDSGLLIDALGGKPGVYSARYAGEPKNDQANIDKVLSELDGVPTQKRTARFFCVIALAEPGKETIFAEGACEGRITEKPTGSNGFGYDPIFFVPSHGQTMAELSAGTKNQLSHRARALTALKETIEGVWPK</sequence>
<keyword id="KW-0378">Hydrolase</keyword>
<keyword id="KW-0460">Magnesium</keyword>
<keyword id="KW-0479">Metal-binding</keyword>
<keyword id="KW-0546">Nucleotide metabolism</keyword>
<keyword id="KW-0547">Nucleotide-binding</keyword>
<keyword id="KW-1185">Reference proteome</keyword>
<gene>
    <name type="ordered locus">ABC2651</name>
</gene>
<reference key="1">
    <citation type="submission" date="2003-10" db="EMBL/GenBank/DDBJ databases">
        <title>The complete genome sequence of the alkaliphilic Bacillus clausii KSM-K16.</title>
        <authorList>
            <person name="Takaki Y."/>
            <person name="Kageyama Y."/>
            <person name="Shimamura S."/>
            <person name="Suzuki H."/>
            <person name="Nishi S."/>
            <person name="Hatada Y."/>
            <person name="Kawai S."/>
            <person name="Ito S."/>
            <person name="Horikoshi K."/>
        </authorList>
    </citation>
    <scope>NUCLEOTIDE SEQUENCE [LARGE SCALE GENOMIC DNA]</scope>
    <source>
        <strain>KSM-K16</strain>
    </source>
</reference>
<evidence type="ECO:0000255" key="1">
    <source>
        <dbReference type="HAMAP-Rule" id="MF_01405"/>
    </source>
</evidence>
<feature type="chain" id="PRO_0000178128" description="dITP/XTP pyrophosphatase">
    <location>
        <begin position="1"/>
        <end position="198"/>
    </location>
</feature>
<feature type="active site" description="Proton acceptor" evidence="1">
    <location>
        <position position="69"/>
    </location>
</feature>
<feature type="binding site" evidence="1">
    <location>
        <begin position="8"/>
        <end position="13"/>
    </location>
    <ligand>
        <name>substrate</name>
    </ligand>
</feature>
<feature type="binding site" evidence="1">
    <location>
        <position position="69"/>
    </location>
    <ligand>
        <name>Mg(2+)</name>
        <dbReference type="ChEBI" id="CHEBI:18420"/>
    </ligand>
</feature>
<feature type="binding site" evidence="1">
    <location>
        <position position="70"/>
    </location>
    <ligand>
        <name>substrate</name>
    </ligand>
</feature>
<feature type="binding site" evidence="1">
    <location>
        <begin position="152"/>
        <end position="155"/>
    </location>
    <ligand>
        <name>substrate</name>
    </ligand>
</feature>
<feature type="binding site" evidence="1">
    <location>
        <position position="175"/>
    </location>
    <ligand>
        <name>substrate</name>
    </ligand>
</feature>
<feature type="binding site" evidence="1">
    <location>
        <begin position="180"/>
        <end position="181"/>
    </location>
    <ligand>
        <name>substrate</name>
    </ligand>
</feature>
<protein>
    <recommendedName>
        <fullName evidence="1">dITP/XTP pyrophosphatase</fullName>
        <ecNumber evidence="1">3.6.1.66</ecNumber>
    </recommendedName>
    <alternativeName>
        <fullName evidence="1">Non-canonical purine NTP pyrophosphatase</fullName>
    </alternativeName>
    <alternativeName>
        <fullName evidence="1">Non-standard purine NTP pyrophosphatase</fullName>
    </alternativeName>
    <alternativeName>
        <fullName evidence="1">Nucleoside-triphosphate diphosphatase</fullName>
    </alternativeName>
    <alternativeName>
        <fullName evidence="1">Nucleoside-triphosphate pyrophosphatase</fullName>
        <shortName evidence="1">NTPase</shortName>
    </alternativeName>
</protein>